<name>RS2_BURO0</name>
<gene>
    <name evidence="1" type="primary">rpsB</name>
    <name type="ordered locus">Bcenmc03_2039</name>
</gene>
<evidence type="ECO:0000255" key="1">
    <source>
        <dbReference type="HAMAP-Rule" id="MF_00291"/>
    </source>
</evidence>
<evidence type="ECO:0000305" key="2"/>
<dbReference type="EMBL" id="CP000958">
    <property type="protein sequence ID" value="ACA91200.1"/>
    <property type="molecule type" value="Genomic_DNA"/>
</dbReference>
<dbReference type="RefSeq" id="WP_011352461.1">
    <property type="nucleotide sequence ID" value="NC_010508.1"/>
</dbReference>
<dbReference type="SMR" id="B1JUF0"/>
<dbReference type="GeneID" id="93143971"/>
<dbReference type="KEGG" id="bcm:Bcenmc03_2039"/>
<dbReference type="HOGENOM" id="CLU_040318_1_2_4"/>
<dbReference type="Proteomes" id="UP000002169">
    <property type="component" value="Chromosome 1"/>
</dbReference>
<dbReference type="GO" id="GO:0022627">
    <property type="term" value="C:cytosolic small ribosomal subunit"/>
    <property type="evidence" value="ECO:0007669"/>
    <property type="project" value="TreeGrafter"/>
</dbReference>
<dbReference type="GO" id="GO:0003735">
    <property type="term" value="F:structural constituent of ribosome"/>
    <property type="evidence" value="ECO:0007669"/>
    <property type="project" value="InterPro"/>
</dbReference>
<dbReference type="GO" id="GO:0006412">
    <property type="term" value="P:translation"/>
    <property type="evidence" value="ECO:0007669"/>
    <property type="project" value="UniProtKB-UniRule"/>
</dbReference>
<dbReference type="CDD" id="cd01425">
    <property type="entry name" value="RPS2"/>
    <property type="match status" value="1"/>
</dbReference>
<dbReference type="FunFam" id="1.10.287.610:FF:000001">
    <property type="entry name" value="30S ribosomal protein S2"/>
    <property type="match status" value="1"/>
</dbReference>
<dbReference type="Gene3D" id="3.40.50.10490">
    <property type="entry name" value="Glucose-6-phosphate isomerase like protein, domain 1"/>
    <property type="match status" value="1"/>
</dbReference>
<dbReference type="Gene3D" id="1.10.287.610">
    <property type="entry name" value="Helix hairpin bin"/>
    <property type="match status" value="1"/>
</dbReference>
<dbReference type="HAMAP" id="MF_00291_B">
    <property type="entry name" value="Ribosomal_uS2_B"/>
    <property type="match status" value="1"/>
</dbReference>
<dbReference type="InterPro" id="IPR001865">
    <property type="entry name" value="Ribosomal_uS2"/>
</dbReference>
<dbReference type="InterPro" id="IPR005706">
    <property type="entry name" value="Ribosomal_uS2_bac/mit/plastid"/>
</dbReference>
<dbReference type="InterPro" id="IPR018130">
    <property type="entry name" value="Ribosomal_uS2_CS"/>
</dbReference>
<dbReference type="InterPro" id="IPR023591">
    <property type="entry name" value="Ribosomal_uS2_flav_dom_sf"/>
</dbReference>
<dbReference type="NCBIfam" id="TIGR01011">
    <property type="entry name" value="rpsB_bact"/>
    <property type="match status" value="1"/>
</dbReference>
<dbReference type="PANTHER" id="PTHR12534">
    <property type="entry name" value="30S RIBOSOMAL PROTEIN S2 PROKARYOTIC AND ORGANELLAR"/>
    <property type="match status" value="1"/>
</dbReference>
<dbReference type="PANTHER" id="PTHR12534:SF0">
    <property type="entry name" value="SMALL RIBOSOMAL SUBUNIT PROTEIN US2M"/>
    <property type="match status" value="1"/>
</dbReference>
<dbReference type="Pfam" id="PF00318">
    <property type="entry name" value="Ribosomal_S2"/>
    <property type="match status" value="1"/>
</dbReference>
<dbReference type="PRINTS" id="PR00395">
    <property type="entry name" value="RIBOSOMALS2"/>
</dbReference>
<dbReference type="SUPFAM" id="SSF52313">
    <property type="entry name" value="Ribosomal protein S2"/>
    <property type="match status" value="1"/>
</dbReference>
<dbReference type="PROSITE" id="PS00962">
    <property type="entry name" value="RIBOSOMAL_S2_1"/>
    <property type="match status" value="1"/>
</dbReference>
<sequence>MAVTMRQMLEAGVHFGHQTRFWNPKMAPFIFGHRNKIHIINLEKTLPMFTDAQKYVRQLAANRGTILFVGTKRQSRDTIAQEAQRAGMPYVNARWLGGMMTNFKTLKVSIKRLKDMEAAVESGETEKMSKKEALLFEREIAKLQKSIGGVKDMGGIPDAIFVVDVGYHKIAVTEANKLGVPVIAVVDTNHSPEGVDYVIPGNDDSSKAVALYAEGVADAILEGRANAVNEVVQAARGDDEYVEENA</sequence>
<keyword id="KW-0687">Ribonucleoprotein</keyword>
<keyword id="KW-0689">Ribosomal protein</keyword>
<protein>
    <recommendedName>
        <fullName evidence="1">Small ribosomal subunit protein uS2</fullName>
    </recommendedName>
    <alternativeName>
        <fullName evidence="2">30S ribosomal protein S2</fullName>
    </alternativeName>
</protein>
<comment type="similarity">
    <text evidence="1">Belongs to the universal ribosomal protein uS2 family.</text>
</comment>
<proteinExistence type="inferred from homology"/>
<accession>B1JUF0</accession>
<organism>
    <name type="scientific">Burkholderia orbicola (strain MC0-3)</name>
    <dbReference type="NCBI Taxonomy" id="406425"/>
    <lineage>
        <taxon>Bacteria</taxon>
        <taxon>Pseudomonadati</taxon>
        <taxon>Pseudomonadota</taxon>
        <taxon>Betaproteobacteria</taxon>
        <taxon>Burkholderiales</taxon>
        <taxon>Burkholderiaceae</taxon>
        <taxon>Burkholderia</taxon>
        <taxon>Burkholderia cepacia complex</taxon>
        <taxon>Burkholderia orbicola</taxon>
    </lineage>
</organism>
<reference key="1">
    <citation type="submission" date="2008-02" db="EMBL/GenBank/DDBJ databases">
        <title>Complete sequence of chromosome 1 of Burkholderia cenocepacia MC0-3.</title>
        <authorList>
            <person name="Copeland A."/>
            <person name="Lucas S."/>
            <person name="Lapidus A."/>
            <person name="Barry K."/>
            <person name="Bruce D."/>
            <person name="Goodwin L."/>
            <person name="Glavina del Rio T."/>
            <person name="Dalin E."/>
            <person name="Tice H."/>
            <person name="Pitluck S."/>
            <person name="Chain P."/>
            <person name="Malfatti S."/>
            <person name="Shin M."/>
            <person name="Vergez L."/>
            <person name="Schmutz J."/>
            <person name="Larimer F."/>
            <person name="Land M."/>
            <person name="Hauser L."/>
            <person name="Kyrpides N."/>
            <person name="Mikhailova N."/>
            <person name="Tiedje J."/>
            <person name="Richardson P."/>
        </authorList>
    </citation>
    <scope>NUCLEOTIDE SEQUENCE [LARGE SCALE GENOMIC DNA]</scope>
    <source>
        <strain>MC0-3</strain>
    </source>
</reference>
<feature type="chain" id="PRO_1000114998" description="Small ribosomal subunit protein uS2">
    <location>
        <begin position="1"/>
        <end position="246"/>
    </location>
</feature>